<gene>
    <name type="primary">J2</name>
</gene>
<comment type="function">
    <text evidence="1">Suppresses the host immune response through NF-kappa-B inactivation. Possesses ankyrin repeat domains required for NF-kappa-B binding but lacks the regulatory regions required for dissociation from NF-kappa-B and degradation. Therefore, prevents host NF-kappa-B release and subsequent activation (By similarity).</text>
</comment>
<comment type="similarity">
    <text evidence="2">Belongs to the polydnaviridae I-Kappa-B-like protein family.</text>
</comment>
<reference key="1">
    <citation type="journal article" date="2006" name="Virology">
        <title>Polydnavirus genomes reflect their dual roles as mutualists and pathogens.</title>
        <authorList>
            <person name="Webb B.A."/>
            <person name="Strand M.R."/>
            <person name="Dickey S.E."/>
            <person name="Beck M.H."/>
            <person name="Hilgarth R.S."/>
            <person name="Barney W.E."/>
            <person name="Kadash K."/>
            <person name="Kroemer J.A."/>
            <person name="Lindstrom K.G."/>
            <person name="Rattanadechakul W."/>
            <person name="Shelby K.S."/>
            <person name="Thoetkiattikul H."/>
            <person name="Turnbull M.W."/>
            <person name="Witherell R.A."/>
        </authorList>
    </citation>
    <scope>NUCLEOTIDE SEQUENCE [GENOMIC DNA]</scope>
</reference>
<organismHost>
    <name type="scientific">Microplitis demolitor</name>
    <name type="common">Parasitoid wasp</name>
    <dbReference type="NCBI Taxonomy" id="69319"/>
</organismHost>
<accession>Q5I140</accession>
<organism>
    <name type="scientific">Microplitis demolitor bracovirus (isolate Webb)</name>
    <name type="common">MdBV</name>
    <dbReference type="NCBI Taxonomy" id="654919"/>
    <lineage>
        <taxon>Viruses</taxon>
        <taxon>Viruses incertae sedis</taxon>
        <taxon>Polydnaviriformidae</taxon>
        <taxon>Bracoviriform</taxon>
        <taxon>Microplitis demolitor bracovirus</taxon>
    </lineage>
</organism>
<evidence type="ECO:0000250" key="1"/>
<evidence type="ECO:0000305" key="2"/>
<protein>
    <recommendedName>
        <fullName>I-Kappa-B like protein J1</fullName>
    </recommendedName>
</protein>
<sequence>MRHILERIFFTSFAKKGWLKMLCAFEGLVDEKTKERLRKRNYHGNTCLHIATEEHRGRQAIWLIEKLVEYGADLDEKKHCDGDTVLHMAVKKGDYKLATWMCQQLSMRFGSRKLSQPHGVSSSIEKR</sequence>
<name>IKBJ1_MDBVW</name>
<proteinExistence type="inferred from homology"/>
<dbReference type="EMBL" id="AY875686">
    <property type="protein sequence ID" value="AAW51791.1"/>
    <property type="molecule type" value="Genomic_DNA"/>
</dbReference>
<dbReference type="RefSeq" id="YP_239388.1">
    <property type="nucleotide sequence ID" value="NC_007036.1"/>
</dbReference>
<dbReference type="SMR" id="Q5I140"/>
<dbReference type="KEGG" id="vg:5075823"/>
<dbReference type="Proteomes" id="UP000008168">
    <property type="component" value="Genome"/>
</dbReference>
<dbReference type="GO" id="GO:0051059">
    <property type="term" value="F:NF-kappaB binding"/>
    <property type="evidence" value="ECO:0007669"/>
    <property type="project" value="TreeGrafter"/>
</dbReference>
<dbReference type="GO" id="GO:0071356">
    <property type="term" value="P:cellular response to tumor necrosis factor"/>
    <property type="evidence" value="ECO:0007669"/>
    <property type="project" value="TreeGrafter"/>
</dbReference>
<dbReference type="GO" id="GO:0085034">
    <property type="term" value="P:symbiont-mediated suppression of host NF-kappaB cascade"/>
    <property type="evidence" value="ECO:0007669"/>
    <property type="project" value="UniProtKB-KW"/>
</dbReference>
<dbReference type="Gene3D" id="1.25.40.20">
    <property type="entry name" value="Ankyrin repeat-containing domain"/>
    <property type="match status" value="1"/>
</dbReference>
<dbReference type="InterPro" id="IPR002110">
    <property type="entry name" value="Ankyrin_rpt"/>
</dbReference>
<dbReference type="InterPro" id="IPR036770">
    <property type="entry name" value="Ankyrin_rpt-contain_sf"/>
</dbReference>
<dbReference type="InterPro" id="IPR051070">
    <property type="entry name" value="NF-kappa-B_inhibitor"/>
</dbReference>
<dbReference type="PANTHER" id="PTHR46680">
    <property type="entry name" value="NF-KAPPA-B INHIBITOR ALPHA"/>
    <property type="match status" value="1"/>
</dbReference>
<dbReference type="PANTHER" id="PTHR46680:SF3">
    <property type="entry name" value="NF-KAPPA-B INHIBITOR CACTUS"/>
    <property type="match status" value="1"/>
</dbReference>
<dbReference type="Pfam" id="PF12796">
    <property type="entry name" value="Ank_2"/>
    <property type="match status" value="1"/>
</dbReference>
<dbReference type="SMART" id="SM00248">
    <property type="entry name" value="ANK"/>
    <property type="match status" value="2"/>
</dbReference>
<dbReference type="SUPFAM" id="SSF48403">
    <property type="entry name" value="Ankyrin repeat"/>
    <property type="match status" value="1"/>
</dbReference>
<dbReference type="PROSITE" id="PS50297">
    <property type="entry name" value="ANK_REP_REGION"/>
    <property type="match status" value="1"/>
</dbReference>
<dbReference type="PROSITE" id="PS50088">
    <property type="entry name" value="ANK_REPEAT"/>
    <property type="match status" value="1"/>
</dbReference>
<keyword id="KW-0040">ANK repeat</keyword>
<keyword id="KW-0945">Host-virus interaction</keyword>
<keyword id="KW-1100">Inhibition of host NF-kappa-B by virus</keyword>
<keyword id="KW-1185">Reference proteome</keyword>
<keyword id="KW-0677">Repeat</keyword>
<feature type="chain" id="PRO_0000405367" description="I-Kappa-B like protein J1">
    <location>
        <begin position="1"/>
        <end position="127"/>
    </location>
</feature>
<feature type="repeat" description="ANK 1">
    <location>
        <begin position="43"/>
        <end position="76"/>
    </location>
</feature>
<feature type="repeat" description="ANK 2">
    <location>
        <begin position="81"/>
        <end position="111"/>
    </location>
</feature>